<accession>F4JIU4</accession>
<accession>O81840</accession>
<accession>Q9M0J7</accession>
<gene>
    <name type="primary">VIII-B</name>
    <name type="synonym">VIIIB</name>
    <name type="ordered locus">At4g27370</name>
    <name type="ORF">M4I22.180</name>
</gene>
<keyword id="KW-0009">Actin-binding</keyword>
<keyword id="KW-0067">ATP-binding</keyword>
<keyword id="KW-0112">Calmodulin-binding</keyword>
<keyword id="KW-0175">Coiled coil</keyword>
<keyword id="KW-0505">Motor protein</keyword>
<keyword id="KW-0518">Myosin</keyword>
<keyword id="KW-0547">Nucleotide-binding</keyword>
<keyword id="KW-1185">Reference proteome</keyword>
<keyword id="KW-0677">Repeat</keyword>
<evidence type="ECO:0000250" key="1"/>
<evidence type="ECO:0000255" key="2"/>
<evidence type="ECO:0000255" key="3">
    <source>
        <dbReference type="PROSITE-ProRule" id="PRU00116"/>
    </source>
</evidence>
<evidence type="ECO:0000255" key="4">
    <source>
        <dbReference type="PROSITE-ProRule" id="PRU00782"/>
    </source>
</evidence>
<evidence type="ECO:0000255" key="5">
    <source>
        <dbReference type="PROSITE-ProRule" id="PRU01190"/>
    </source>
</evidence>
<evidence type="ECO:0000256" key="6">
    <source>
        <dbReference type="SAM" id="MobiDB-lite"/>
    </source>
</evidence>
<evidence type="ECO:0000305" key="7"/>
<sequence>MMKSSVKEILESLRLLDSSERSSSLPSPSTFRAPMPLIRQSLPAKFRNAISLESKTIEKEDKDWSTEQITQSAEKEKTGNEVVKISTAQMSRAKNSHDPEWINSAEYFVREKLCVWCRVAANGQWHLGKIHSTSSSDDVCVMLSANDDVRTMEEIFPANPEILEGVEDLTQLSYLNEPSLLYNLRVRYSQDLIYSKAGPVLIAVNPFKNVQIYGEEFLSAYQKNALDAPHVYAVADAAYDDMMREEKNQSIIISGESGAGKTETAKYAMQYLEALGGGSFGVENEILKTNCILEAFGNAKTSRNDNSSRFGKLMEIHFSAKGKICGAKLETFSLDQSRVAQLCNGERCYHIFYQLCAGASPILKERLKIKAASEYNYLNQSNCLTIDRTDDAQKFHKLMEAFNIVQIPQEYQERTFALLAAVLWLGNVSFEVIDNENHVEVVADEAVTNVAMLMGCNSKKLMVVLSTCKLQAGRDCIAKRLTLRQATDMRDSLAKIIYASLFNWLVEQINISLEVGNSRTGRSISILDIYGFESFKDNSFEQFCINYANERLQQHFNRHLFKLEQEEYEGDGIDWTKVEFIDNQECLNLIEKKPIGLVSLLNEESNFPKATDTTFANKLKQHLNANSCFKGERGRGFRIKHYAGEVLYNTNGFLEKNRDPLHVDLIQLLSLCKCQLLNLFSTKMHHDFLKPATFSDSMNQSVIAKFKGQLFKLMNKLEDTTPHFIRCIKPNSNQLPGLYEENHVLQQLRCCGVLEIVRISRSGYPTRLTHQELAVRYGCLLLDTRISQDPLSTSKAILKQCNLPPEMYQVGYTKIYLRTGVISVLEERKKYVLRGILGLQKQFRGYQTREYFHNMRNAAVILQSYIRGENARRNYIVVGESAIVSTAITKELDAAIHLQYMVRKWLARKLLNSTQQKNKPRNEKKKTRRKSTKRVSEDKELLSEQFEVQPCVLADLQSRVLKVEAAIMQKEDENTALQEELQRFEERWLENETRMKSMEDTWQKHMSSMQMSLAAACKVLAPDKTASHGTDSEDTMSFGTPTKELKGSLSDVNNLSTEFDQRSVIIHEDPKSLVEVKSDSISNRKQHAEELRRLKSRFEKWKKDYKTRLRETKARVRLNGDEGRHRNWWCKKSY</sequence>
<proteinExistence type="inferred from homology"/>
<reference key="1">
    <citation type="journal article" date="1999" name="Nature">
        <title>Sequence and analysis of chromosome 4 of the plant Arabidopsis thaliana.</title>
        <authorList>
            <person name="Mayer K.F.X."/>
            <person name="Schueller C."/>
            <person name="Wambutt R."/>
            <person name="Murphy G."/>
            <person name="Volckaert G."/>
            <person name="Pohl T."/>
            <person name="Duesterhoeft A."/>
            <person name="Stiekema W."/>
            <person name="Entian K.-D."/>
            <person name="Terryn N."/>
            <person name="Harris B."/>
            <person name="Ansorge W."/>
            <person name="Brandt P."/>
            <person name="Grivell L.A."/>
            <person name="Rieger M."/>
            <person name="Weichselgartner M."/>
            <person name="de Simone V."/>
            <person name="Obermaier B."/>
            <person name="Mache R."/>
            <person name="Mueller M."/>
            <person name="Kreis M."/>
            <person name="Delseny M."/>
            <person name="Puigdomenech P."/>
            <person name="Watson M."/>
            <person name="Schmidtheini T."/>
            <person name="Reichert B."/>
            <person name="Portetelle D."/>
            <person name="Perez-Alonso M."/>
            <person name="Boutry M."/>
            <person name="Bancroft I."/>
            <person name="Vos P."/>
            <person name="Hoheisel J."/>
            <person name="Zimmermann W."/>
            <person name="Wedler H."/>
            <person name="Ridley P."/>
            <person name="Langham S.-A."/>
            <person name="McCullagh B."/>
            <person name="Bilham L."/>
            <person name="Robben J."/>
            <person name="van der Schueren J."/>
            <person name="Grymonprez B."/>
            <person name="Chuang Y.-J."/>
            <person name="Vandenbussche F."/>
            <person name="Braeken M."/>
            <person name="Weltjens I."/>
            <person name="Voet M."/>
            <person name="Bastiaens I."/>
            <person name="Aert R."/>
            <person name="Defoor E."/>
            <person name="Weitzenegger T."/>
            <person name="Bothe G."/>
            <person name="Ramsperger U."/>
            <person name="Hilbert H."/>
            <person name="Braun M."/>
            <person name="Holzer E."/>
            <person name="Brandt A."/>
            <person name="Peters S."/>
            <person name="van Staveren M."/>
            <person name="Dirkse W."/>
            <person name="Mooijman P."/>
            <person name="Klein Lankhorst R."/>
            <person name="Rose M."/>
            <person name="Hauf J."/>
            <person name="Koetter P."/>
            <person name="Berneiser S."/>
            <person name="Hempel S."/>
            <person name="Feldpausch M."/>
            <person name="Lamberth S."/>
            <person name="Van den Daele H."/>
            <person name="De Keyser A."/>
            <person name="Buysshaert C."/>
            <person name="Gielen J."/>
            <person name="Villarroel R."/>
            <person name="De Clercq R."/>
            <person name="van Montagu M."/>
            <person name="Rogers J."/>
            <person name="Cronin A."/>
            <person name="Quail M.A."/>
            <person name="Bray-Allen S."/>
            <person name="Clark L."/>
            <person name="Doggett J."/>
            <person name="Hall S."/>
            <person name="Kay M."/>
            <person name="Lennard N."/>
            <person name="McLay K."/>
            <person name="Mayes R."/>
            <person name="Pettett A."/>
            <person name="Rajandream M.A."/>
            <person name="Lyne M."/>
            <person name="Benes V."/>
            <person name="Rechmann S."/>
            <person name="Borkova D."/>
            <person name="Bloecker H."/>
            <person name="Scharfe M."/>
            <person name="Grimm M."/>
            <person name="Loehnert T.-H."/>
            <person name="Dose S."/>
            <person name="de Haan M."/>
            <person name="Maarse A.C."/>
            <person name="Schaefer M."/>
            <person name="Mueller-Auer S."/>
            <person name="Gabel C."/>
            <person name="Fuchs M."/>
            <person name="Fartmann B."/>
            <person name="Granderath K."/>
            <person name="Dauner D."/>
            <person name="Herzl A."/>
            <person name="Neumann S."/>
            <person name="Argiriou A."/>
            <person name="Vitale D."/>
            <person name="Liguori R."/>
            <person name="Piravandi E."/>
            <person name="Massenet O."/>
            <person name="Quigley F."/>
            <person name="Clabauld G."/>
            <person name="Muendlein A."/>
            <person name="Felber R."/>
            <person name="Schnabl S."/>
            <person name="Hiller R."/>
            <person name="Schmidt W."/>
            <person name="Lecharny A."/>
            <person name="Aubourg S."/>
            <person name="Chefdor F."/>
            <person name="Cooke R."/>
            <person name="Berger C."/>
            <person name="Monfort A."/>
            <person name="Casacuberta E."/>
            <person name="Gibbons T."/>
            <person name="Weber N."/>
            <person name="Vandenbol M."/>
            <person name="Bargues M."/>
            <person name="Terol J."/>
            <person name="Torres A."/>
            <person name="Perez-Perez A."/>
            <person name="Purnelle B."/>
            <person name="Bent E."/>
            <person name="Johnson S."/>
            <person name="Tacon D."/>
            <person name="Jesse T."/>
            <person name="Heijnen L."/>
            <person name="Schwarz S."/>
            <person name="Scholler P."/>
            <person name="Heber S."/>
            <person name="Francs P."/>
            <person name="Bielke C."/>
            <person name="Frishman D."/>
            <person name="Haase D."/>
            <person name="Lemcke K."/>
            <person name="Mewes H.-W."/>
            <person name="Stocker S."/>
            <person name="Zaccaria P."/>
            <person name="Bevan M."/>
            <person name="Wilson R.K."/>
            <person name="de la Bastide M."/>
            <person name="Habermann K."/>
            <person name="Parnell L."/>
            <person name="Dedhia N."/>
            <person name="Gnoj L."/>
            <person name="Schutz K."/>
            <person name="Huang E."/>
            <person name="Spiegel L."/>
            <person name="Sekhon M."/>
            <person name="Murray J."/>
            <person name="Sheet P."/>
            <person name="Cordes M."/>
            <person name="Abu-Threideh J."/>
            <person name="Stoneking T."/>
            <person name="Kalicki J."/>
            <person name="Graves T."/>
            <person name="Harmon G."/>
            <person name="Edwards J."/>
            <person name="Latreille P."/>
            <person name="Courtney L."/>
            <person name="Cloud J."/>
            <person name="Abbott A."/>
            <person name="Scott K."/>
            <person name="Johnson D."/>
            <person name="Minx P."/>
            <person name="Bentley D."/>
            <person name="Fulton B."/>
            <person name="Miller N."/>
            <person name="Greco T."/>
            <person name="Kemp K."/>
            <person name="Kramer J."/>
            <person name="Fulton L."/>
            <person name="Mardis E."/>
            <person name="Dante M."/>
            <person name="Pepin K."/>
            <person name="Hillier L.W."/>
            <person name="Nelson J."/>
            <person name="Spieth J."/>
            <person name="Ryan E."/>
            <person name="Andrews S."/>
            <person name="Geisel C."/>
            <person name="Layman D."/>
            <person name="Du H."/>
            <person name="Ali J."/>
            <person name="Berghoff A."/>
            <person name="Jones K."/>
            <person name="Drone K."/>
            <person name="Cotton M."/>
            <person name="Joshu C."/>
            <person name="Antonoiu B."/>
            <person name="Zidanic M."/>
            <person name="Strong C."/>
            <person name="Sun H."/>
            <person name="Lamar B."/>
            <person name="Yordan C."/>
            <person name="Ma P."/>
            <person name="Zhong J."/>
            <person name="Preston R."/>
            <person name="Vil D."/>
            <person name="Shekher M."/>
            <person name="Matero A."/>
            <person name="Shah R."/>
            <person name="Swaby I.K."/>
            <person name="O'Shaughnessy A."/>
            <person name="Rodriguez M."/>
            <person name="Hoffman J."/>
            <person name="Till S."/>
            <person name="Granat S."/>
            <person name="Shohdy N."/>
            <person name="Hasegawa A."/>
            <person name="Hameed A."/>
            <person name="Lodhi M."/>
            <person name="Johnson A."/>
            <person name="Chen E."/>
            <person name="Marra M.A."/>
            <person name="Martienssen R."/>
            <person name="McCombie W.R."/>
        </authorList>
    </citation>
    <scope>NUCLEOTIDE SEQUENCE [LARGE SCALE GENOMIC DNA]</scope>
    <source>
        <strain>cv. Columbia</strain>
    </source>
</reference>
<reference key="2">
    <citation type="journal article" date="2017" name="Plant J.">
        <title>Araport11: a complete reannotation of the Arabidopsis thaliana reference genome.</title>
        <authorList>
            <person name="Cheng C.Y."/>
            <person name="Krishnakumar V."/>
            <person name="Chan A.P."/>
            <person name="Thibaud-Nissen F."/>
            <person name="Schobel S."/>
            <person name="Town C.D."/>
        </authorList>
    </citation>
    <scope>GENOME REANNOTATION</scope>
    <source>
        <strain>cv. Columbia</strain>
    </source>
</reference>
<reference key="3">
    <citation type="journal article" date="2000" name="J. Cell Sci.">
        <title>A myosin family tree.</title>
        <authorList>
            <person name="Hodge T."/>
            <person name="Cope M.J."/>
        </authorList>
    </citation>
    <scope>GENE FAMILY</scope>
</reference>
<reference key="4">
    <citation type="journal article" date="2001" name="Genome Biol.">
        <title>Analysis of the myosins encoded in the recently completed Arabidopsis thaliana genome sequence.</title>
        <authorList>
            <person name="Reddy A.S."/>
            <person name="Day I.S."/>
        </authorList>
    </citation>
    <scope>GENE FAMILY</scope>
</reference>
<reference key="5">
    <citation type="journal article" date="2011" name="Plant Physiol.">
        <title>Expression, splicing, and evolution of the myosin gene family in plants.</title>
        <authorList>
            <person name="Peremyslov V.V."/>
            <person name="Mockler T.C."/>
            <person name="Filichkin S.A."/>
            <person name="Fox S.E."/>
            <person name="Jaiswal P."/>
            <person name="Makarova K.S."/>
            <person name="Koonin E.V."/>
            <person name="Dolja V.V."/>
        </authorList>
    </citation>
    <scope>GENE FAMILY</scope>
    <scope>NOMENCLATURE</scope>
</reference>
<name>MYO4_ARATH</name>
<organism>
    <name type="scientific">Arabidopsis thaliana</name>
    <name type="common">Mouse-ear cress</name>
    <dbReference type="NCBI Taxonomy" id="3702"/>
    <lineage>
        <taxon>Eukaryota</taxon>
        <taxon>Viridiplantae</taxon>
        <taxon>Streptophyta</taxon>
        <taxon>Embryophyta</taxon>
        <taxon>Tracheophyta</taxon>
        <taxon>Spermatophyta</taxon>
        <taxon>Magnoliopsida</taxon>
        <taxon>eudicotyledons</taxon>
        <taxon>Gunneridae</taxon>
        <taxon>Pentapetalae</taxon>
        <taxon>rosids</taxon>
        <taxon>malvids</taxon>
        <taxon>Brassicales</taxon>
        <taxon>Brassicaceae</taxon>
        <taxon>Camelineae</taxon>
        <taxon>Arabidopsis</taxon>
    </lineage>
</organism>
<dbReference type="EMBL" id="AL030978">
    <property type="protein sequence ID" value="CAA19731.1"/>
    <property type="status" value="ALT_SEQ"/>
    <property type="molecule type" value="Genomic_DNA"/>
</dbReference>
<dbReference type="EMBL" id="AL161571">
    <property type="protein sequence ID" value="CAB81387.1"/>
    <property type="status" value="ALT_SEQ"/>
    <property type="molecule type" value="Genomic_DNA"/>
</dbReference>
<dbReference type="EMBL" id="CP002687">
    <property type="protein sequence ID" value="AEE85329.1"/>
    <property type="molecule type" value="Genomic_DNA"/>
</dbReference>
<dbReference type="PIR" id="A85318">
    <property type="entry name" value="A85318"/>
</dbReference>
<dbReference type="PIR" id="T05761">
    <property type="entry name" value="T05761"/>
</dbReference>
<dbReference type="RefSeq" id="NP_194467.5">
    <property type="nucleotide sequence ID" value="NM_118871.6"/>
</dbReference>
<dbReference type="SMR" id="F4JIU4"/>
<dbReference type="FunCoup" id="F4JIU4">
    <property type="interactions" value="215"/>
</dbReference>
<dbReference type="STRING" id="3702.F4JIU4"/>
<dbReference type="PaxDb" id="3702-AT4G27370.1"/>
<dbReference type="EnsemblPlants" id="AT4G27370.1">
    <property type="protein sequence ID" value="AT4G27370.1"/>
    <property type="gene ID" value="AT4G27370"/>
</dbReference>
<dbReference type="GeneID" id="828845"/>
<dbReference type="Gramene" id="AT4G27370.1">
    <property type="protein sequence ID" value="AT4G27370.1"/>
    <property type="gene ID" value="AT4G27370"/>
</dbReference>
<dbReference type="KEGG" id="ath:AT4G27370"/>
<dbReference type="Araport" id="AT4G27370"/>
<dbReference type="TAIR" id="AT4G27370">
    <property type="gene designation" value="VIIIB"/>
</dbReference>
<dbReference type="eggNOG" id="KOG0160">
    <property type="taxonomic scope" value="Eukaryota"/>
</dbReference>
<dbReference type="HOGENOM" id="CLU_000192_7_2_1"/>
<dbReference type="InParanoid" id="F4JIU4"/>
<dbReference type="PRO" id="PR:F4JIU4"/>
<dbReference type="Proteomes" id="UP000006548">
    <property type="component" value="Chromosome 4"/>
</dbReference>
<dbReference type="ExpressionAtlas" id="F4JIU4">
    <property type="expression patterns" value="baseline and differential"/>
</dbReference>
<dbReference type="GO" id="GO:0016459">
    <property type="term" value="C:myosin complex"/>
    <property type="evidence" value="ECO:0007669"/>
    <property type="project" value="UniProtKB-KW"/>
</dbReference>
<dbReference type="GO" id="GO:0003779">
    <property type="term" value="F:actin binding"/>
    <property type="evidence" value="ECO:0007669"/>
    <property type="project" value="UniProtKB-KW"/>
</dbReference>
<dbReference type="GO" id="GO:0005524">
    <property type="term" value="F:ATP binding"/>
    <property type="evidence" value="ECO:0007669"/>
    <property type="project" value="UniProtKB-KW"/>
</dbReference>
<dbReference type="GO" id="GO:0005516">
    <property type="term" value="F:calmodulin binding"/>
    <property type="evidence" value="ECO:0007669"/>
    <property type="project" value="UniProtKB-KW"/>
</dbReference>
<dbReference type="GO" id="GO:0003774">
    <property type="term" value="F:cytoskeletal motor activity"/>
    <property type="evidence" value="ECO:0000250"/>
    <property type="project" value="TAIR"/>
</dbReference>
<dbReference type="GO" id="GO:0030048">
    <property type="term" value="P:actin filament-based movement"/>
    <property type="evidence" value="ECO:0000304"/>
    <property type="project" value="TAIR"/>
</dbReference>
<dbReference type="CDD" id="cd01383">
    <property type="entry name" value="MYSc_Myo8"/>
    <property type="match status" value="1"/>
</dbReference>
<dbReference type="FunFam" id="1.10.10.820:FF:000001">
    <property type="entry name" value="Myosin heavy chain"/>
    <property type="match status" value="1"/>
</dbReference>
<dbReference type="FunFam" id="1.20.120.720:FF:000028">
    <property type="entry name" value="Myosin IE heavy chain"/>
    <property type="match status" value="1"/>
</dbReference>
<dbReference type="FunFam" id="1.20.58.530:FF:000013">
    <property type="entry name" value="Unconventional myosin-XIX"/>
    <property type="match status" value="1"/>
</dbReference>
<dbReference type="Gene3D" id="1.10.10.820">
    <property type="match status" value="1"/>
</dbReference>
<dbReference type="Gene3D" id="1.20.5.190">
    <property type="match status" value="1"/>
</dbReference>
<dbReference type="Gene3D" id="1.20.58.530">
    <property type="match status" value="1"/>
</dbReference>
<dbReference type="Gene3D" id="6.20.240.20">
    <property type="match status" value="1"/>
</dbReference>
<dbReference type="Gene3D" id="3.40.850.10">
    <property type="entry name" value="Kinesin motor domain"/>
    <property type="match status" value="1"/>
</dbReference>
<dbReference type="Gene3D" id="1.20.120.720">
    <property type="entry name" value="Myosin VI head, motor domain, U50 subdomain"/>
    <property type="match status" value="1"/>
</dbReference>
<dbReference type="InterPro" id="IPR000048">
    <property type="entry name" value="IQ_motif_EF-hand-BS"/>
</dbReference>
<dbReference type="InterPro" id="IPR036961">
    <property type="entry name" value="Kinesin_motor_dom_sf"/>
</dbReference>
<dbReference type="InterPro" id="IPR001609">
    <property type="entry name" value="Myosin_head_motor_dom-like"/>
</dbReference>
<dbReference type="InterPro" id="IPR004009">
    <property type="entry name" value="Myosin_N"/>
</dbReference>
<dbReference type="InterPro" id="IPR036022">
    <property type="entry name" value="MYSc_Myo8"/>
</dbReference>
<dbReference type="InterPro" id="IPR027417">
    <property type="entry name" value="P-loop_NTPase"/>
</dbReference>
<dbReference type="PANTHER" id="PTHR13140">
    <property type="entry name" value="MYOSIN"/>
    <property type="match status" value="1"/>
</dbReference>
<dbReference type="PANTHER" id="PTHR13140:SF763">
    <property type="entry name" value="MYOSIN-4"/>
    <property type="match status" value="1"/>
</dbReference>
<dbReference type="Pfam" id="PF00612">
    <property type="entry name" value="IQ"/>
    <property type="match status" value="3"/>
</dbReference>
<dbReference type="Pfam" id="PF00063">
    <property type="entry name" value="Myosin_head"/>
    <property type="match status" value="1"/>
</dbReference>
<dbReference type="PRINTS" id="PR00193">
    <property type="entry name" value="MYOSINHEAVY"/>
</dbReference>
<dbReference type="SMART" id="SM00015">
    <property type="entry name" value="IQ"/>
    <property type="match status" value="3"/>
</dbReference>
<dbReference type="SMART" id="SM00242">
    <property type="entry name" value="MYSc"/>
    <property type="match status" value="1"/>
</dbReference>
<dbReference type="SUPFAM" id="SSF52540">
    <property type="entry name" value="P-loop containing nucleoside triphosphate hydrolases"/>
    <property type="match status" value="1"/>
</dbReference>
<dbReference type="PROSITE" id="PS50096">
    <property type="entry name" value="IQ"/>
    <property type="match status" value="3"/>
</dbReference>
<dbReference type="PROSITE" id="PS51456">
    <property type="entry name" value="MYOSIN_MOTOR"/>
    <property type="match status" value="1"/>
</dbReference>
<dbReference type="PROSITE" id="PS51844">
    <property type="entry name" value="SH3_LIKE"/>
    <property type="match status" value="1"/>
</dbReference>
<protein>
    <recommendedName>
        <fullName>Myosin-4</fullName>
    </recommendedName>
    <alternativeName>
        <fullName>MYOSIN VIII B</fullName>
        <shortName>AtVIIIB</shortName>
    </alternativeName>
</protein>
<comment type="function">
    <text evidence="1">Myosin heavy chain that is required for the cell cycle-regulated transport of various organelles and proteins for their segregation. Functions by binding with its tail domain to receptor proteins on organelles and exerting force with its N-terminal motor domain against actin filaments, thereby transporting its cargo along polarized actin cables (By similarity).</text>
</comment>
<comment type="subunit">
    <text evidence="1">Homodimer.</text>
</comment>
<comment type="domain">
    <text evidence="1">IQ domain mediates interaction with calmodulin.</text>
</comment>
<comment type="similarity">
    <text evidence="7">Belongs to the TRAFAC class myosin-kinesin ATPase superfamily. Myosin family. Plant myosin class VIII subfamily.</text>
</comment>
<comment type="sequence caution" evidence="7">
    <conflict type="erroneous gene model prediction">
        <sequence resource="EMBL-CDS" id="CAA19731"/>
    </conflict>
</comment>
<comment type="sequence caution" evidence="7">
    <conflict type="erroneous gene model prediction">
        <sequence resource="EMBL-CDS" id="CAB81387"/>
    </conflict>
</comment>
<feature type="chain" id="PRO_0000422860" description="Myosin-4">
    <location>
        <begin position="1"/>
        <end position="1134"/>
    </location>
</feature>
<feature type="domain" description="Myosin N-terminal SH3-like" evidence="5">
    <location>
        <begin position="110"/>
        <end position="160"/>
    </location>
</feature>
<feature type="domain" description="Myosin motor" evidence="4">
    <location>
        <begin position="164"/>
        <end position="830"/>
    </location>
</feature>
<feature type="domain" description="IQ 1" evidence="3">
    <location>
        <begin position="832"/>
        <end position="861"/>
    </location>
</feature>
<feature type="domain" description="IQ 2" evidence="3">
    <location>
        <begin position="855"/>
        <end position="884"/>
    </location>
</feature>
<feature type="domain" description="IQ 3" evidence="3">
    <location>
        <begin position="891"/>
        <end position="920"/>
    </location>
</feature>
<feature type="region of interest" description="Actin-binding" evidence="2">
    <location>
        <begin position="589"/>
        <end position="623"/>
    </location>
</feature>
<feature type="region of interest" description="Actin-binding" evidence="1">
    <location>
        <begin position="710"/>
        <end position="732"/>
    </location>
</feature>
<feature type="region of interest" description="Disordered" evidence="6">
    <location>
        <begin position="913"/>
        <end position="939"/>
    </location>
</feature>
<feature type="coiled-coil region" evidence="2">
    <location>
        <begin position="953"/>
        <end position="999"/>
    </location>
</feature>
<feature type="compositionally biased region" description="Basic residues" evidence="6">
    <location>
        <begin position="918"/>
        <end position="933"/>
    </location>
</feature>
<feature type="binding site" evidence="2">
    <location>
        <begin position="255"/>
        <end position="262"/>
    </location>
    <ligand>
        <name>ATP</name>
        <dbReference type="ChEBI" id="CHEBI:30616"/>
    </ligand>
</feature>
<feature type="binding site" evidence="2">
    <location>
        <begin position="304"/>
        <end position="312"/>
    </location>
    <ligand>
        <name>ATP</name>
        <dbReference type="ChEBI" id="CHEBI:30616"/>
    </ligand>
</feature>